<evidence type="ECO:0000255" key="1">
    <source>
        <dbReference type="HAMAP-Rule" id="MF_00440"/>
    </source>
</evidence>
<evidence type="ECO:0000305" key="2"/>
<name>NRDR_PSEPK</name>
<keyword id="KW-0067">ATP-binding</keyword>
<keyword id="KW-0238">DNA-binding</keyword>
<keyword id="KW-0479">Metal-binding</keyword>
<keyword id="KW-0547">Nucleotide-binding</keyword>
<keyword id="KW-1185">Reference proteome</keyword>
<keyword id="KW-0678">Repressor</keyword>
<keyword id="KW-0804">Transcription</keyword>
<keyword id="KW-0805">Transcription regulation</keyword>
<keyword id="KW-0862">Zinc</keyword>
<keyword id="KW-0863">Zinc-finger</keyword>
<organism>
    <name type="scientific">Pseudomonas putida (strain ATCC 47054 / DSM 6125 / CFBP 8728 / NCIMB 11950 / KT2440)</name>
    <dbReference type="NCBI Taxonomy" id="160488"/>
    <lineage>
        <taxon>Bacteria</taxon>
        <taxon>Pseudomonadati</taxon>
        <taxon>Pseudomonadota</taxon>
        <taxon>Gammaproteobacteria</taxon>
        <taxon>Pseudomonadales</taxon>
        <taxon>Pseudomonadaceae</taxon>
        <taxon>Pseudomonas</taxon>
    </lineage>
</organism>
<comment type="function">
    <text evidence="1">Negatively regulates transcription of bacterial ribonucleotide reductase nrd genes and operons by binding to NrdR-boxes.</text>
</comment>
<comment type="cofactor">
    <cofactor evidence="1">
        <name>Zn(2+)</name>
        <dbReference type="ChEBI" id="CHEBI:29105"/>
    </cofactor>
    <text evidence="1">Binds 1 zinc ion.</text>
</comment>
<comment type="similarity">
    <text evidence="1">Belongs to the NrdR family.</text>
</comment>
<comment type="sequence caution" evidence="2">
    <conflict type="erroneous initiation">
        <sequence resource="EMBL-CDS" id="AAN66140"/>
    </conflict>
</comment>
<reference key="1">
    <citation type="journal article" date="2002" name="Environ. Microbiol.">
        <title>Complete genome sequence and comparative analysis of the metabolically versatile Pseudomonas putida KT2440.</title>
        <authorList>
            <person name="Nelson K.E."/>
            <person name="Weinel C."/>
            <person name="Paulsen I.T."/>
            <person name="Dodson R.J."/>
            <person name="Hilbert H."/>
            <person name="Martins dos Santos V.A.P."/>
            <person name="Fouts D.E."/>
            <person name="Gill S.R."/>
            <person name="Pop M."/>
            <person name="Holmes M."/>
            <person name="Brinkac L.M."/>
            <person name="Beanan M.J."/>
            <person name="DeBoy R.T."/>
            <person name="Daugherty S.C."/>
            <person name="Kolonay J.F."/>
            <person name="Madupu R."/>
            <person name="Nelson W.C."/>
            <person name="White O."/>
            <person name="Peterson J.D."/>
            <person name="Khouri H.M."/>
            <person name="Hance I."/>
            <person name="Chris Lee P."/>
            <person name="Holtzapple E.K."/>
            <person name="Scanlan D."/>
            <person name="Tran K."/>
            <person name="Moazzez A."/>
            <person name="Utterback T.R."/>
            <person name="Rizzo M."/>
            <person name="Lee K."/>
            <person name="Kosack D."/>
            <person name="Moestl D."/>
            <person name="Wedler H."/>
            <person name="Lauber J."/>
            <person name="Stjepandic D."/>
            <person name="Hoheisel J."/>
            <person name="Straetz M."/>
            <person name="Heim S."/>
            <person name="Kiewitz C."/>
            <person name="Eisen J.A."/>
            <person name="Timmis K.N."/>
            <person name="Duesterhoeft A."/>
            <person name="Tuemmler B."/>
            <person name="Fraser C.M."/>
        </authorList>
    </citation>
    <scope>NUCLEOTIDE SEQUENCE [LARGE SCALE GENOMIC DNA]</scope>
    <source>
        <strain>ATCC 47054 / DSM 6125 / CFBP 8728 / NCIMB 11950 / KT2440</strain>
    </source>
</reference>
<gene>
    <name evidence="1" type="primary">nrdR</name>
    <name type="ordered locus">PP_0513</name>
</gene>
<dbReference type="EMBL" id="AE015451">
    <property type="protein sequence ID" value="AAN66140.1"/>
    <property type="status" value="ALT_INIT"/>
    <property type="molecule type" value="Genomic_DNA"/>
</dbReference>
<dbReference type="RefSeq" id="NP_742676.3">
    <property type="nucleotide sequence ID" value="NC_002947.4"/>
</dbReference>
<dbReference type="RefSeq" id="WP_003255402.1">
    <property type="nucleotide sequence ID" value="NZ_CP169744.1"/>
</dbReference>
<dbReference type="SMR" id="Q88QI0"/>
<dbReference type="STRING" id="160488.PP_0513"/>
<dbReference type="PaxDb" id="160488-PP_0513"/>
<dbReference type="GeneID" id="97166039"/>
<dbReference type="KEGG" id="ppu:PP_0513"/>
<dbReference type="PATRIC" id="fig|160488.4.peg.549"/>
<dbReference type="eggNOG" id="COG1327">
    <property type="taxonomic scope" value="Bacteria"/>
</dbReference>
<dbReference type="HOGENOM" id="CLU_108412_0_0_6"/>
<dbReference type="OrthoDB" id="9807461at2"/>
<dbReference type="PhylomeDB" id="Q88QI0"/>
<dbReference type="Proteomes" id="UP000000556">
    <property type="component" value="Chromosome"/>
</dbReference>
<dbReference type="GO" id="GO:0005524">
    <property type="term" value="F:ATP binding"/>
    <property type="evidence" value="ECO:0007669"/>
    <property type="project" value="UniProtKB-KW"/>
</dbReference>
<dbReference type="GO" id="GO:0003677">
    <property type="term" value="F:DNA binding"/>
    <property type="evidence" value="ECO:0007669"/>
    <property type="project" value="UniProtKB-KW"/>
</dbReference>
<dbReference type="GO" id="GO:0008270">
    <property type="term" value="F:zinc ion binding"/>
    <property type="evidence" value="ECO:0007669"/>
    <property type="project" value="UniProtKB-UniRule"/>
</dbReference>
<dbReference type="GO" id="GO:0045892">
    <property type="term" value="P:negative regulation of DNA-templated transcription"/>
    <property type="evidence" value="ECO:0007669"/>
    <property type="project" value="UniProtKB-UniRule"/>
</dbReference>
<dbReference type="HAMAP" id="MF_00440">
    <property type="entry name" value="NrdR"/>
    <property type="match status" value="1"/>
</dbReference>
<dbReference type="InterPro" id="IPR005144">
    <property type="entry name" value="ATP-cone_dom"/>
</dbReference>
<dbReference type="InterPro" id="IPR055173">
    <property type="entry name" value="NrdR-like_N"/>
</dbReference>
<dbReference type="InterPro" id="IPR003796">
    <property type="entry name" value="RNR_NrdR-like"/>
</dbReference>
<dbReference type="NCBIfam" id="TIGR00244">
    <property type="entry name" value="transcriptional regulator NrdR"/>
    <property type="match status" value="1"/>
</dbReference>
<dbReference type="PANTHER" id="PTHR30455">
    <property type="entry name" value="TRANSCRIPTIONAL REPRESSOR NRDR"/>
    <property type="match status" value="1"/>
</dbReference>
<dbReference type="PANTHER" id="PTHR30455:SF2">
    <property type="entry name" value="TRANSCRIPTIONAL REPRESSOR NRDR"/>
    <property type="match status" value="1"/>
</dbReference>
<dbReference type="Pfam" id="PF03477">
    <property type="entry name" value="ATP-cone"/>
    <property type="match status" value="1"/>
</dbReference>
<dbReference type="Pfam" id="PF22811">
    <property type="entry name" value="Zn_ribbon_NrdR"/>
    <property type="match status" value="1"/>
</dbReference>
<dbReference type="PROSITE" id="PS51161">
    <property type="entry name" value="ATP_CONE"/>
    <property type="match status" value="1"/>
</dbReference>
<sequence length="154" mass="17867">MHCPFCGANDTKVIDSRLVAEGEQVRRRRECVACGERFTTFETAELVLPRLIKQDGTRQPFDEEKLRAGMQRALEKRPVSVERLEAALAHIKSRLRATGEREVKSLVVGEMVMAELRKLDEVAYIRFASVYRRFQDLDEFREEIDRLAREPAKE</sequence>
<proteinExistence type="inferred from homology"/>
<feature type="chain" id="PRO_0000182335" description="Transcriptional repressor NrdR">
    <location>
        <begin position="1"/>
        <end position="154"/>
    </location>
</feature>
<feature type="domain" description="ATP-cone" evidence="1">
    <location>
        <begin position="49"/>
        <end position="139"/>
    </location>
</feature>
<feature type="zinc finger region" evidence="1">
    <location>
        <begin position="3"/>
        <end position="34"/>
    </location>
</feature>
<accession>Q88QI0</accession>
<protein>
    <recommendedName>
        <fullName evidence="1">Transcriptional repressor NrdR</fullName>
    </recommendedName>
</protein>